<comment type="function">
    <text evidence="1">Catalyzes the ATP-dependent conversion of 7-carboxy-7-deazaguanine (CDG) to 7-cyano-7-deazaguanine (preQ(0)).</text>
</comment>
<comment type="catalytic activity">
    <reaction evidence="1">
        <text>7-carboxy-7-deazaguanine + NH4(+) + ATP = 7-cyano-7-deazaguanine + ADP + phosphate + H2O + H(+)</text>
        <dbReference type="Rhea" id="RHEA:27982"/>
        <dbReference type="ChEBI" id="CHEBI:15377"/>
        <dbReference type="ChEBI" id="CHEBI:15378"/>
        <dbReference type="ChEBI" id="CHEBI:28938"/>
        <dbReference type="ChEBI" id="CHEBI:30616"/>
        <dbReference type="ChEBI" id="CHEBI:43474"/>
        <dbReference type="ChEBI" id="CHEBI:45075"/>
        <dbReference type="ChEBI" id="CHEBI:61036"/>
        <dbReference type="ChEBI" id="CHEBI:456216"/>
        <dbReference type="EC" id="6.3.4.20"/>
    </reaction>
</comment>
<comment type="cofactor">
    <cofactor evidence="1">
        <name>Zn(2+)</name>
        <dbReference type="ChEBI" id="CHEBI:29105"/>
    </cofactor>
    <text evidence="1">Binds 1 zinc ion per subunit.</text>
</comment>
<comment type="pathway">
    <text evidence="1">Purine metabolism; 7-cyano-7-deazaguanine biosynthesis.</text>
</comment>
<comment type="subunit">
    <text evidence="1">Homodimer.</text>
</comment>
<comment type="similarity">
    <text evidence="1">Belongs to the QueC family.</text>
</comment>
<reference key="1">
    <citation type="journal article" date="2001" name="Lancet">
        <title>Whole genome sequencing of meticillin-resistant Staphylococcus aureus.</title>
        <authorList>
            <person name="Kuroda M."/>
            <person name="Ohta T."/>
            <person name="Uchiyama I."/>
            <person name="Baba T."/>
            <person name="Yuzawa H."/>
            <person name="Kobayashi I."/>
            <person name="Cui L."/>
            <person name="Oguchi A."/>
            <person name="Aoki K."/>
            <person name="Nagai Y."/>
            <person name="Lian J.-Q."/>
            <person name="Ito T."/>
            <person name="Kanamori M."/>
            <person name="Matsumaru H."/>
            <person name="Maruyama A."/>
            <person name="Murakami H."/>
            <person name="Hosoyama A."/>
            <person name="Mizutani-Ui Y."/>
            <person name="Takahashi N.K."/>
            <person name="Sawano T."/>
            <person name="Inoue R."/>
            <person name="Kaito C."/>
            <person name="Sekimizu K."/>
            <person name="Hirakawa H."/>
            <person name="Kuhara S."/>
            <person name="Goto S."/>
            <person name="Yabuzaki J."/>
            <person name="Kanehisa M."/>
            <person name="Yamashita A."/>
            <person name="Oshima K."/>
            <person name="Furuya K."/>
            <person name="Yoshino C."/>
            <person name="Shiba T."/>
            <person name="Hattori M."/>
            <person name="Ogasawara N."/>
            <person name="Hayashi H."/>
            <person name="Hiramatsu K."/>
        </authorList>
    </citation>
    <scope>NUCLEOTIDE SEQUENCE [LARGE SCALE GENOMIC DNA]</scope>
    <source>
        <strain>N315</strain>
    </source>
</reference>
<proteinExistence type="inferred from homology"/>
<dbReference type="EC" id="6.3.4.20" evidence="1"/>
<dbReference type="EMBL" id="BA000018">
    <property type="protein sequence ID" value="BAB41900.1"/>
    <property type="molecule type" value="Genomic_DNA"/>
</dbReference>
<dbReference type="PIR" id="A89843">
    <property type="entry name" value="A89843"/>
</dbReference>
<dbReference type="RefSeq" id="WP_000446724.1">
    <property type="nucleotide sequence ID" value="NC_002745.2"/>
</dbReference>
<dbReference type="SMR" id="Q7A6U7"/>
<dbReference type="EnsemblBacteria" id="BAB41900">
    <property type="protein sequence ID" value="BAB41900"/>
    <property type="gene ID" value="BAB41900"/>
</dbReference>
<dbReference type="KEGG" id="sau:SA0667"/>
<dbReference type="HOGENOM" id="CLU_081854_0_0_9"/>
<dbReference type="UniPathway" id="UPA00391"/>
<dbReference type="GO" id="GO:0005524">
    <property type="term" value="F:ATP binding"/>
    <property type="evidence" value="ECO:0007669"/>
    <property type="project" value="UniProtKB-UniRule"/>
</dbReference>
<dbReference type="GO" id="GO:0016879">
    <property type="term" value="F:ligase activity, forming carbon-nitrogen bonds"/>
    <property type="evidence" value="ECO:0007669"/>
    <property type="project" value="UniProtKB-UniRule"/>
</dbReference>
<dbReference type="GO" id="GO:0008270">
    <property type="term" value="F:zinc ion binding"/>
    <property type="evidence" value="ECO:0007669"/>
    <property type="project" value="UniProtKB-UniRule"/>
</dbReference>
<dbReference type="GO" id="GO:0008616">
    <property type="term" value="P:queuosine biosynthetic process"/>
    <property type="evidence" value="ECO:0007669"/>
    <property type="project" value="UniProtKB-UniRule"/>
</dbReference>
<dbReference type="CDD" id="cd01995">
    <property type="entry name" value="QueC-like"/>
    <property type="match status" value="1"/>
</dbReference>
<dbReference type="FunFam" id="3.40.50.620:FF:000017">
    <property type="entry name" value="7-cyano-7-deazaguanine synthase"/>
    <property type="match status" value="1"/>
</dbReference>
<dbReference type="Gene3D" id="3.40.50.620">
    <property type="entry name" value="HUPs"/>
    <property type="match status" value="1"/>
</dbReference>
<dbReference type="HAMAP" id="MF_01633">
    <property type="entry name" value="QueC"/>
    <property type="match status" value="1"/>
</dbReference>
<dbReference type="InterPro" id="IPR018317">
    <property type="entry name" value="QueC"/>
</dbReference>
<dbReference type="InterPro" id="IPR014729">
    <property type="entry name" value="Rossmann-like_a/b/a_fold"/>
</dbReference>
<dbReference type="NCBIfam" id="TIGR00364">
    <property type="entry name" value="7-cyano-7-deazaguanine synthase QueC"/>
    <property type="match status" value="1"/>
</dbReference>
<dbReference type="PANTHER" id="PTHR42914">
    <property type="entry name" value="7-CYANO-7-DEAZAGUANINE SYNTHASE"/>
    <property type="match status" value="1"/>
</dbReference>
<dbReference type="PANTHER" id="PTHR42914:SF1">
    <property type="entry name" value="7-CYANO-7-DEAZAGUANINE SYNTHASE"/>
    <property type="match status" value="1"/>
</dbReference>
<dbReference type="Pfam" id="PF06508">
    <property type="entry name" value="QueC"/>
    <property type="match status" value="1"/>
</dbReference>
<dbReference type="PIRSF" id="PIRSF006293">
    <property type="entry name" value="ExsB"/>
    <property type="match status" value="1"/>
</dbReference>
<dbReference type="SUPFAM" id="SSF52402">
    <property type="entry name" value="Adenine nucleotide alpha hydrolases-like"/>
    <property type="match status" value="1"/>
</dbReference>
<name>QUEC_STAAN</name>
<gene>
    <name evidence="1" type="primary">queC</name>
    <name type="ordered locus">SA0667</name>
</gene>
<organism>
    <name type="scientific">Staphylococcus aureus (strain N315)</name>
    <dbReference type="NCBI Taxonomy" id="158879"/>
    <lineage>
        <taxon>Bacteria</taxon>
        <taxon>Bacillati</taxon>
        <taxon>Bacillota</taxon>
        <taxon>Bacilli</taxon>
        <taxon>Bacillales</taxon>
        <taxon>Staphylococcaceae</taxon>
        <taxon>Staphylococcus</taxon>
    </lineage>
</organism>
<accession>Q7A6U7</accession>
<protein>
    <recommendedName>
        <fullName evidence="1">7-cyano-7-deazaguanine synthase</fullName>
        <ecNumber evidence="1">6.3.4.20</ecNumber>
    </recommendedName>
    <alternativeName>
        <fullName evidence="1">7-cyano-7-carbaguanine synthase</fullName>
    </alternativeName>
    <alternativeName>
        <fullName evidence="1">PreQ(0) synthase</fullName>
    </alternativeName>
    <alternativeName>
        <fullName evidence="1">Queuosine biosynthesis protein QueC</fullName>
    </alternativeName>
</protein>
<sequence length="222" mass="24887">MESVLNNEKAIVVFSGGQDSTTCLFYAKKHFKEVELVTFNYGQRHDTEIEVAKQIAQDQGMKHHVLDMSLLSQLTPNALTQHDMEITNNEDGIPNTFVPARNLLFLSFAGALAYQIGAKHIITGVCETDFSGYPDCRDSFIKSMNVTLSLAMDKDFVIHTPLMWLNKAETWKLSDELEVLDYIRTKTLTCYNGIIGDGCGECPACHLRQRGLNQYLESKGAL</sequence>
<feature type="chain" id="PRO_0000246934" description="7-cyano-7-deazaguanine synthase">
    <location>
        <begin position="1"/>
        <end position="222"/>
    </location>
</feature>
<feature type="binding site" evidence="1">
    <location>
        <begin position="14"/>
        <end position="24"/>
    </location>
    <ligand>
        <name>ATP</name>
        <dbReference type="ChEBI" id="CHEBI:30616"/>
    </ligand>
</feature>
<feature type="binding site" evidence="1">
    <location>
        <position position="190"/>
    </location>
    <ligand>
        <name>Zn(2+)</name>
        <dbReference type="ChEBI" id="CHEBI:29105"/>
    </ligand>
</feature>
<feature type="binding site" evidence="1">
    <location>
        <position position="199"/>
    </location>
    <ligand>
        <name>Zn(2+)</name>
        <dbReference type="ChEBI" id="CHEBI:29105"/>
    </ligand>
</feature>
<feature type="binding site" evidence="1">
    <location>
        <position position="202"/>
    </location>
    <ligand>
        <name>Zn(2+)</name>
        <dbReference type="ChEBI" id="CHEBI:29105"/>
    </ligand>
</feature>
<feature type="binding site" evidence="1">
    <location>
        <position position="205"/>
    </location>
    <ligand>
        <name>Zn(2+)</name>
        <dbReference type="ChEBI" id="CHEBI:29105"/>
    </ligand>
</feature>
<keyword id="KW-0067">ATP-binding</keyword>
<keyword id="KW-0436">Ligase</keyword>
<keyword id="KW-0479">Metal-binding</keyword>
<keyword id="KW-0547">Nucleotide-binding</keyword>
<keyword id="KW-0671">Queuosine biosynthesis</keyword>
<keyword id="KW-0862">Zinc</keyword>
<evidence type="ECO:0000255" key="1">
    <source>
        <dbReference type="HAMAP-Rule" id="MF_01633"/>
    </source>
</evidence>